<accession>Q44118</accession>
<sequence>MPAARPAGAGVGLVDRYGRRATDMRLSLTDKCNLRCTYCMPAEGLEWLSKQAVMSASEIVRIVGIGVGRLGVRELRLTGGEPLVRHDLVDIIAELRRNHPELPISMTTNGVGLAKKVAPLKAAGLTRINVSLDSLHEETFTKLTRRPFLDQVLAGVDAAWAAGLGPVKLNAVLMRGINDAEAPSLLAWAVERGYELRFIEQMPLDADHGWTRRNMITAAEIRDLLSTDFVLTPDPRARDGAPAERFEVRRRVAGSGAGLGPVLGTVGIIASVTEPFCSDCRRTRITAEGRIMSCLFSREEFDLLVLLRSGASDDDLARRWQDAMWLKPKAHGMDHVGLDAPDFVQPDRSMSAIGG</sequence>
<dbReference type="EC" id="4.1.99.22" evidence="1"/>
<dbReference type="EMBL" id="X78980">
    <property type="protein sequence ID" value="CAA55583.1"/>
    <property type="status" value="ALT_INIT"/>
    <property type="molecule type" value="Genomic_DNA"/>
</dbReference>
<dbReference type="EMBL" id="Y10817">
    <property type="protein sequence ID" value="CAA71779.1"/>
    <property type="molecule type" value="Genomic_DNA"/>
</dbReference>
<dbReference type="PIR" id="I39637">
    <property type="entry name" value="I39637"/>
</dbReference>
<dbReference type="PIR" id="T44850">
    <property type="entry name" value="T44850"/>
</dbReference>
<dbReference type="SMR" id="Q44118"/>
<dbReference type="STRING" id="29320.CVCC1112_3238"/>
<dbReference type="BRENDA" id="4.1.99.22">
    <property type="organism ID" value="449"/>
</dbReference>
<dbReference type="UniPathway" id="UPA00344"/>
<dbReference type="GO" id="GO:0051539">
    <property type="term" value="F:4 iron, 4 sulfur cluster binding"/>
    <property type="evidence" value="ECO:0007669"/>
    <property type="project" value="UniProtKB-UniRule"/>
</dbReference>
<dbReference type="GO" id="GO:0061799">
    <property type="term" value="F:cyclic pyranopterin monophosphate synthase activity"/>
    <property type="evidence" value="ECO:0007669"/>
    <property type="project" value="TreeGrafter"/>
</dbReference>
<dbReference type="GO" id="GO:0061798">
    <property type="term" value="F:GTP 3',8'-cyclase activity"/>
    <property type="evidence" value="ECO:0007669"/>
    <property type="project" value="UniProtKB-UniRule"/>
</dbReference>
<dbReference type="GO" id="GO:0005525">
    <property type="term" value="F:GTP binding"/>
    <property type="evidence" value="ECO:0007669"/>
    <property type="project" value="UniProtKB-UniRule"/>
</dbReference>
<dbReference type="GO" id="GO:0046872">
    <property type="term" value="F:metal ion binding"/>
    <property type="evidence" value="ECO:0007669"/>
    <property type="project" value="UniProtKB-KW"/>
</dbReference>
<dbReference type="GO" id="GO:1904047">
    <property type="term" value="F:S-adenosyl-L-methionine binding"/>
    <property type="evidence" value="ECO:0007669"/>
    <property type="project" value="UniProtKB-UniRule"/>
</dbReference>
<dbReference type="GO" id="GO:0006777">
    <property type="term" value="P:Mo-molybdopterin cofactor biosynthetic process"/>
    <property type="evidence" value="ECO:0007669"/>
    <property type="project" value="UniProtKB-UniRule"/>
</dbReference>
<dbReference type="CDD" id="cd01335">
    <property type="entry name" value="Radical_SAM"/>
    <property type="match status" value="1"/>
</dbReference>
<dbReference type="CDD" id="cd21117">
    <property type="entry name" value="Twitch_MoaA"/>
    <property type="match status" value="1"/>
</dbReference>
<dbReference type="Gene3D" id="3.20.20.70">
    <property type="entry name" value="Aldolase class I"/>
    <property type="match status" value="1"/>
</dbReference>
<dbReference type="HAMAP" id="MF_01225_B">
    <property type="entry name" value="MoaA_B"/>
    <property type="match status" value="1"/>
</dbReference>
<dbReference type="InterPro" id="IPR013785">
    <property type="entry name" value="Aldolase_TIM"/>
</dbReference>
<dbReference type="InterPro" id="IPR006638">
    <property type="entry name" value="Elp3/MiaA/NifB-like_rSAM"/>
</dbReference>
<dbReference type="InterPro" id="IPR013483">
    <property type="entry name" value="MoaA"/>
</dbReference>
<dbReference type="InterPro" id="IPR000385">
    <property type="entry name" value="MoaA_NifB_PqqE_Fe-S-bd_CS"/>
</dbReference>
<dbReference type="InterPro" id="IPR010505">
    <property type="entry name" value="MoaA_twitch"/>
</dbReference>
<dbReference type="InterPro" id="IPR050105">
    <property type="entry name" value="MoCo_biosynth_MoaA/MoaC"/>
</dbReference>
<dbReference type="InterPro" id="IPR007197">
    <property type="entry name" value="rSAM"/>
</dbReference>
<dbReference type="NCBIfam" id="TIGR02666">
    <property type="entry name" value="moaA"/>
    <property type="match status" value="1"/>
</dbReference>
<dbReference type="PANTHER" id="PTHR22960:SF0">
    <property type="entry name" value="MOLYBDENUM COFACTOR BIOSYNTHESIS PROTEIN 1"/>
    <property type="match status" value="1"/>
</dbReference>
<dbReference type="PANTHER" id="PTHR22960">
    <property type="entry name" value="MOLYBDOPTERIN COFACTOR SYNTHESIS PROTEIN A"/>
    <property type="match status" value="1"/>
</dbReference>
<dbReference type="Pfam" id="PF13353">
    <property type="entry name" value="Fer4_12"/>
    <property type="match status" value="1"/>
</dbReference>
<dbReference type="Pfam" id="PF06463">
    <property type="entry name" value="Mob_synth_C"/>
    <property type="match status" value="1"/>
</dbReference>
<dbReference type="Pfam" id="PF04055">
    <property type="entry name" value="Radical_SAM"/>
    <property type="match status" value="1"/>
</dbReference>
<dbReference type="SFLD" id="SFLDG01383">
    <property type="entry name" value="cyclic_pyranopterin_phosphate"/>
    <property type="match status" value="1"/>
</dbReference>
<dbReference type="SFLD" id="SFLDS00029">
    <property type="entry name" value="Radical_SAM"/>
    <property type="match status" value="1"/>
</dbReference>
<dbReference type="SMART" id="SM00729">
    <property type="entry name" value="Elp3"/>
    <property type="match status" value="1"/>
</dbReference>
<dbReference type="SUPFAM" id="SSF102114">
    <property type="entry name" value="Radical SAM enzymes"/>
    <property type="match status" value="1"/>
</dbReference>
<dbReference type="PROSITE" id="PS01305">
    <property type="entry name" value="MOAA_NIFB_PQQE"/>
    <property type="match status" value="1"/>
</dbReference>
<dbReference type="PROSITE" id="PS51918">
    <property type="entry name" value="RADICAL_SAM"/>
    <property type="match status" value="1"/>
</dbReference>
<comment type="function">
    <text>Catalyzes, together with MoaC, the conversion of 5'-GTP to cyclic pyranopterin monophosphate (cPMP or molybdopterin precursor Z).</text>
</comment>
<comment type="function">
    <text evidence="1">Catalyzes the cyclization of GTP to (8S)-3',8-cyclo-7,8-dihydroguanosine 5'-triphosphate.</text>
</comment>
<comment type="catalytic activity">
    <reaction evidence="1">
        <text>GTP + AH2 + S-adenosyl-L-methionine = (8S)-3',8-cyclo-7,8-dihydroguanosine 5'-triphosphate + 5'-deoxyadenosine + L-methionine + A + H(+)</text>
        <dbReference type="Rhea" id="RHEA:49576"/>
        <dbReference type="ChEBI" id="CHEBI:13193"/>
        <dbReference type="ChEBI" id="CHEBI:15378"/>
        <dbReference type="ChEBI" id="CHEBI:17319"/>
        <dbReference type="ChEBI" id="CHEBI:17499"/>
        <dbReference type="ChEBI" id="CHEBI:37565"/>
        <dbReference type="ChEBI" id="CHEBI:57844"/>
        <dbReference type="ChEBI" id="CHEBI:59789"/>
        <dbReference type="ChEBI" id="CHEBI:131766"/>
        <dbReference type="EC" id="4.1.99.22"/>
    </reaction>
</comment>
<comment type="cofactor">
    <cofactor evidence="1">
        <name>[4Fe-4S] cluster</name>
        <dbReference type="ChEBI" id="CHEBI:49883"/>
    </cofactor>
    <text evidence="1">Binds 2 [4Fe-4S] clusters. Binds 1 [4Fe-4S] cluster coordinated with 3 cysteines and an exchangeable S-adenosyl-L-methionine and 1 [4Fe-4S] cluster coordinated with 3 cysteines and the GTP-derived substrate.</text>
</comment>
<comment type="pathway">
    <text evidence="1">Cofactor biosynthesis; molybdopterin biosynthesis.</text>
</comment>
<comment type="subunit">
    <text evidence="4">Monomer.</text>
</comment>
<comment type="miscellaneous">
    <text>PubMed:8706892 shows that MoaA seems to contain a 3Fe-4S cluster, but it may actually be two 4Fe-4S clusters as was shown in the crystallographic study of the protein homolog from Staphylococcus aureus.</text>
</comment>
<comment type="similarity">
    <text evidence="1">Belongs to the radical SAM superfamily. MoaA family.</text>
</comment>
<comment type="sequence caution" evidence="5">
    <conflict type="erroneous initiation">
        <sequence resource="EMBL-CDS" id="CAA55583"/>
    </conflict>
</comment>
<protein>
    <recommendedName>
        <fullName evidence="1">GTP 3',8-cyclase</fullName>
        <ecNumber evidence="1">4.1.99.22</ecNumber>
    </recommendedName>
    <alternativeName>
        <fullName evidence="1">Molybdenum cofactor biosynthesis protein A</fullName>
    </alternativeName>
</protein>
<gene>
    <name evidence="1" type="primary">moaA</name>
</gene>
<organism>
    <name type="scientific">Paenarthrobacter nicotinovorans</name>
    <name type="common">Arthrobacter nicotinovorans</name>
    <dbReference type="NCBI Taxonomy" id="29320"/>
    <lineage>
        <taxon>Bacteria</taxon>
        <taxon>Bacillati</taxon>
        <taxon>Actinomycetota</taxon>
        <taxon>Actinomycetes</taxon>
        <taxon>Micrococcales</taxon>
        <taxon>Micrococcaceae</taxon>
        <taxon>Paenarthrobacter</taxon>
    </lineage>
</organism>
<feature type="chain" id="PRO_0000152947" description="GTP 3',8-cyclase">
    <location>
        <begin position="1"/>
        <end position="355"/>
    </location>
</feature>
<feature type="domain" description="Radical SAM core" evidence="2">
    <location>
        <begin position="16"/>
        <end position="242"/>
    </location>
</feature>
<feature type="binding site" evidence="1">
    <location>
        <position position="25"/>
    </location>
    <ligand>
        <name>GTP</name>
        <dbReference type="ChEBI" id="CHEBI:37565"/>
    </ligand>
</feature>
<feature type="binding site" evidence="1">
    <location>
        <position position="32"/>
    </location>
    <ligand>
        <name>[4Fe-4S] cluster</name>
        <dbReference type="ChEBI" id="CHEBI:49883"/>
        <label>1</label>
        <note>4Fe-4S-S-AdoMet</note>
    </ligand>
</feature>
<feature type="binding site" evidence="1">
    <location>
        <position position="36"/>
    </location>
    <ligand>
        <name>[4Fe-4S] cluster</name>
        <dbReference type="ChEBI" id="CHEBI:49883"/>
        <label>1</label>
        <note>4Fe-4S-S-AdoMet</note>
    </ligand>
</feature>
<feature type="binding site" evidence="1">
    <location>
        <position position="38"/>
    </location>
    <ligand>
        <name>S-adenosyl-L-methionine</name>
        <dbReference type="ChEBI" id="CHEBI:59789"/>
    </ligand>
</feature>
<feature type="binding site" evidence="1">
    <location>
        <position position="39"/>
    </location>
    <ligand>
        <name>[4Fe-4S] cluster</name>
        <dbReference type="ChEBI" id="CHEBI:49883"/>
        <label>1</label>
        <note>4Fe-4S-S-AdoMet</note>
    </ligand>
</feature>
<feature type="binding site" evidence="1">
    <location>
        <position position="76"/>
    </location>
    <ligand>
        <name>GTP</name>
        <dbReference type="ChEBI" id="CHEBI:37565"/>
    </ligand>
</feature>
<feature type="binding site" evidence="1">
    <location>
        <position position="80"/>
    </location>
    <ligand>
        <name>S-adenosyl-L-methionine</name>
        <dbReference type="ChEBI" id="CHEBI:59789"/>
    </ligand>
</feature>
<feature type="binding site" evidence="1">
    <location>
        <position position="107"/>
    </location>
    <ligand>
        <name>GTP</name>
        <dbReference type="ChEBI" id="CHEBI:37565"/>
    </ligand>
</feature>
<feature type="binding site" evidence="1">
    <location>
        <position position="131"/>
    </location>
    <ligand>
        <name>S-adenosyl-L-methionine</name>
        <dbReference type="ChEBI" id="CHEBI:59789"/>
    </ligand>
</feature>
<feature type="binding site" evidence="1">
    <location>
        <position position="168"/>
    </location>
    <ligand>
        <name>GTP</name>
        <dbReference type="ChEBI" id="CHEBI:37565"/>
    </ligand>
</feature>
<feature type="binding site" evidence="1">
    <location>
        <position position="202"/>
    </location>
    <ligand>
        <name>S-adenosyl-L-methionine</name>
        <dbReference type="ChEBI" id="CHEBI:59789"/>
    </ligand>
</feature>
<feature type="binding site" evidence="1">
    <location>
        <position position="277"/>
    </location>
    <ligand>
        <name>[4Fe-4S] cluster</name>
        <dbReference type="ChEBI" id="CHEBI:49883"/>
        <label>2</label>
        <note>4Fe-4S-substrate</note>
    </ligand>
</feature>
<feature type="binding site" evidence="1">
    <location>
        <position position="280"/>
    </location>
    <ligand>
        <name>[4Fe-4S] cluster</name>
        <dbReference type="ChEBI" id="CHEBI:49883"/>
        <label>2</label>
        <note>4Fe-4S-substrate</note>
    </ligand>
</feature>
<feature type="binding site" evidence="1">
    <location>
        <begin position="282"/>
        <end position="284"/>
    </location>
    <ligand>
        <name>GTP</name>
        <dbReference type="ChEBI" id="CHEBI:37565"/>
    </ligand>
</feature>
<feature type="binding site" evidence="1">
    <location>
        <position position="294"/>
    </location>
    <ligand>
        <name>[4Fe-4S] cluster</name>
        <dbReference type="ChEBI" id="CHEBI:49883"/>
        <label>2</label>
        <note>4Fe-4S-substrate</note>
    </ligand>
</feature>
<feature type="mutagenesis site" description="Loss of activity and loss of ability to assemble an Fe-S cluster." evidence="3">
    <original>C</original>
    <variation>S</variation>
    <location>
        <position position="32"/>
    </location>
</feature>
<feature type="mutagenesis site" description="Loss of activity. Still able to assemble an Fe-S cluster; when associated with S-280." evidence="3">
    <original>C</original>
    <variation>S</variation>
    <location>
        <position position="36"/>
    </location>
</feature>
<feature type="mutagenesis site" description="Loss of activity." evidence="3">
    <original>Y</original>
    <variation>A</variation>
    <variation>P</variation>
    <variation>S</variation>
    <location>
        <position position="38"/>
    </location>
</feature>
<feature type="mutagenesis site" description="Loss of activity." evidence="3">
    <original>C</original>
    <variation>S</variation>
    <location>
        <position position="39"/>
    </location>
</feature>
<feature type="mutagenesis site" description="Loss of activity." evidence="4">
    <original>C</original>
    <variation>S</variation>
    <location>
        <position position="277"/>
    </location>
</feature>
<feature type="mutagenesis site" description="Loss of activity. Still able to assemble an Fe-S cluster; when associated with S-36." evidence="4">
    <original>C</original>
    <variation>S</variation>
    <location>
        <position position="280"/>
    </location>
</feature>
<feature type="mutagenesis site" description="Loss of activity." evidence="4">
    <original>C</original>
    <variation>S</variation>
    <location>
        <position position="294"/>
    </location>
</feature>
<proteinExistence type="evidence at protein level"/>
<name>MOAA_PAENI</name>
<evidence type="ECO:0000255" key="1">
    <source>
        <dbReference type="HAMAP-Rule" id="MF_01225"/>
    </source>
</evidence>
<evidence type="ECO:0000255" key="2">
    <source>
        <dbReference type="PROSITE-ProRule" id="PRU01266"/>
    </source>
</evidence>
<evidence type="ECO:0000269" key="3">
    <source>
    </source>
</evidence>
<evidence type="ECO:0000269" key="4">
    <source>
    </source>
</evidence>
<evidence type="ECO:0000305" key="5"/>
<keyword id="KW-0004">4Fe-4S</keyword>
<keyword id="KW-0342">GTP-binding</keyword>
<keyword id="KW-0408">Iron</keyword>
<keyword id="KW-0411">Iron-sulfur</keyword>
<keyword id="KW-0456">Lyase</keyword>
<keyword id="KW-0479">Metal-binding</keyword>
<keyword id="KW-0501">Molybdenum cofactor biosynthesis</keyword>
<keyword id="KW-0547">Nucleotide-binding</keyword>
<keyword id="KW-0614">Plasmid</keyword>
<keyword id="KW-0949">S-adenosyl-L-methionine</keyword>
<reference key="1">
    <citation type="journal article" date="1995" name="Arch. Microbiol.">
        <title>A pAO1-encoded molybdopterin cofactor gene (moaA) of Arthrobacter nicotinovorans: characterization and site-directed mutagenesis of the encoded protein.</title>
        <authorList>
            <person name="Menendez C."/>
            <person name="Igloi G."/>
            <person name="Henninger H."/>
            <person name="Brandsch R."/>
        </authorList>
    </citation>
    <scope>NUCLEOTIDE SEQUENCE [GENOMIC DNA]</scope>
    <scope>MUTAGENESIS OF CYS-32; CYS-36; TYR-38 AND CYS-39</scope>
</reference>
<reference key="2">
    <citation type="journal article" date="1996" name="FEBS Lett.">
        <title>MoaA of Arthrobacter nicotinovorans pAO1 involved in Mo-pterin cofactor synthesis is an Fe-S protein.</title>
        <authorList>
            <person name="Menendez C."/>
            <person name="Siebert D."/>
            <person name="Brandsch R."/>
        </authorList>
    </citation>
    <scope>CHARACTERIZATION</scope>
    <scope>SUBUNIT</scope>
    <scope>MUTAGENESIS OF CYS-277; CYS-280 AND CYS-294</scope>
</reference>
<geneLocation type="plasmid">
    <name>pAO1</name>
</geneLocation>